<name>Y1341_STAAM</name>
<evidence type="ECO:0000255" key="1">
    <source>
        <dbReference type="HAMAP-Rule" id="MF_01103"/>
    </source>
</evidence>
<evidence type="ECO:0000256" key="2">
    <source>
        <dbReference type="SAM" id="MobiDB-lite"/>
    </source>
</evidence>
<protein>
    <recommendedName>
        <fullName evidence="1">UPF0291 protein SAV1341</fullName>
    </recommendedName>
</protein>
<keyword id="KW-0963">Cytoplasm</keyword>
<dbReference type="EMBL" id="BA000017">
    <property type="protein sequence ID" value="BAB57503.1"/>
    <property type="molecule type" value="Genomic_DNA"/>
</dbReference>
<dbReference type="RefSeq" id="WP_000071351.1">
    <property type="nucleotide sequence ID" value="NC_002758.2"/>
</dbReference>
<dbReference type="SMR" id="P60074"/>
<dbReference type="KEGG" id="sav:SAV1341"/>
<dbReference type="HOGENOM" id="CLU_173137_0_2_9"/>
<dbReference type="PhylomeDB" id="P60074"/>
<dbReference type="Proteomes" id="UP000002481">
    <property type="component" value="Chromosome"/>
</dbReference>
<dbReference type="GO" id="GO:0005737">
    <property type="term" value="C:cytoplasm"/>
    <property type="evidence" value="ECO:0007669"/>
    <property type="project" value="UniProtKB-SubCell"/>
</dbReference>
<dbReference type="Gene3D" id="1.10.287.540">
    <property type="entry name" value="Helix hairpin bin"/>
    <property type="match status" value="1"/>
</dbReference>
<dbReference type="HAMAP" id="MF_01103">
    <property type="entry name" value="UPF0291"/>
    <property type="match status" value="1"/>
</dbReference>
<dbReference type="InterPro" id="IPR009242">
    <property type="entry name" value="DUF896"/>
</dbReference>
<dbReference type="PANTHER" id="PTHR37300">
    <property type="entry name" value="UPF0291 PROTEIN CBO2609/CLC_2481"/>
    <property type="match status" value="1"/>
</dbReference>
<dbReference type="PANTHER" id="PTHR37300:SF1">
    <property type="entry name" value="UPF0291 PROTEIN YNZC"/>
    <property type="match status" value="1"/>
</dbReference>
<dbReference type="Pfam" id="PF05979">
    <property type="entry name" value="DUF896"/>
    <property type="match status" value="1"/>
</dbReference>
<dbReference type="SUPFAM" id="SSF158221">
    <property type="entry name" value="YnzC-like"/>
    <property type="match status" value="1"/>
</dbReference>
<gene>
    <name type="ordered locus">SAV1341</name>
</gene>
<sequence>MSNSDLNIERINELAKKKKEVGLTQEEAKEQTALRKAYLESFRKGFKQQIENTKVIDPEGNDVTPEKIKEIQQKRDNKN</sequence>
<feature type="chain" id="PRO_0000094985" description="UPF0291 protein SAV1341">
    <location>
        <begin position="1"/>
        <end position="79"/>
    </location>
</feature>
<feature type="region of interest" description="Disordered" evidence="2">
    <location>
        <begin position="56"/>
        <end position="79"/>
    </location>
</feature>
<feature type="compositionally biased region" description="Basic and acidic residues" evidence="2">
    <location>
        <begin position="64"/>
        <end position="79"/>
    </location>
</feature>
<organism>
    <name type="scientific">Staphylococcus aureus (strain Mu50 / ATCC 700699)</name>
    <dbReference type="NCBI Taxonomy" id="158878"/>
    <lineage>
        <taxon>Bacteria</taxon>
        <taxon>Bacillati</taxon>
        <taxon>Bacillota</taxon>
        <taxon>Bacilli</taxon>
        <taxon>Bacillales</taxon>
        <taxon>Staphylococcaceae</taxon>
        <taxon>Staphylococcus</taxon>
    </lineage>
</organism>
<reference key="1">
    <citation type="journal article" date="2001" name="Lancet">
        <title>Whole genome sequencing of meticillin-resistant Staphylococcus aureus.</title>
        <authorList>
            <person name="Kuroda M."/>
            <person name="Ohta T."/>
            <person name="Uchiyama I."/>
            <person name="Baba T."/>
            <person name="Yuzawa H."/>
            <person name="Kobayashi I."/>
            <person name="Cui L."/>
            <person name="Oguchi A."/>
            <person name="Aoki K."/>
            <person name="Nagai Y."/>
            <person name="Lian J.-Q."/>
            <person name="Ito T."/>
            <person name="Kanamori M."/>
            <person name="Matsumaru H."/>
            <person name="Maruyama A."/>
            <person name="Murakami H."/>
            <person name="Hosoyama A."/>
            <person name="Mizutani-Ui Y."/>
            <person name="Takahashi N.K."/>
            <person name="Sawano T."/>
            <person name="Inoue R."/>
            <person name="Kaito C."/>
            <person name="Sekimizu K."/>
            <person name="Hirakawa H."/>
            <person name="Kuhara S."/>
            <person name="Goto S."/>
            <person name="Yabuzaki J."/>
            <person name="Kanehisa M."/>
            <person name="Yamashita A."/>
            <person name="Oshima K."/>
            <person name="Furuya K."/>
            <person name="Yoshino C."/>
            <person name="Shiba T."/>
            <person name="Hattori M."/>
            <person name="Ogasawara N."/>
            <person name="Hayashi H."/>
            <person name="Hiramatsu K."/>
        </authorList>
    </citation>
    <scope>NUCLEOTIDE SEQUENCE [LARGE SCALE GENOMIC DNA]</scope>
    <source>
        <strain>Mu50 / ATCC 700699</strain>
    </source>
</reference>
<proteinExistence type="inferred from homology"/>
<comment type="subcellular location">
    <subcellularLocation>
        <location evidence="1">Cytoplasm</location>
    </subcellularLocation>
</comment>
<comment type="similarity">
    <text evidence="1">Belongs to the UPF0291 family.</text>
</comment>
<accession>P60074</accession>
<accession>Q99UD5</accession>